<comment type="function">
    <text evidence="1">Transfers an acetyl group from acetyl-CoA to L-homoserine, forming acetyl-L-homoserine.</text>
</comment>
<comment type="catalytic activity">
    <reaction evidence="1">
        <text>L-homoserine + acetyl-CoA = O-acetyl-L-homoserine + CoA</text>
        <dbReference type="Rhea" id="RHEA:13701"/>
        <dbReference type="ChEBI" id="CHEBI:57287"/>
        <dbReference type="ChEBI" id="CHEBI:57288"/>
        <dbReference type="ChEBI" id="CHEBI:57476"/>
        <dbReference type="ChEBI" id="CHEBI:57716"/>
        <dbReference type="EC" id="2.3.1.31"/>
    </reaction>
</comment>
<comment type="pathway">
    <text evidence="1">Amino-acid biosynthesis; L-methionine biosynthesis via de novo pathway; O-acetyl-L-homoserine from L-homoserine: step 1/1.</text>
</comment>
<comment type="subunit">
    <text evidence="1">Homodimer.</text>
</comment>
<comment type="subcellular location">
    <subcellularLocation>
        <location evidence="1">Cytoplasm</location>
    </subcellularLocation>
</comment>
<comment type="similarity">
    <text evidence="1">Belongs to the AB hydrolase superfamily. MetX family.</text>
</comment>
<proteinExistence type="inferred from homology"/>
<name>METXA_GEODF</name>
<sequence length="367" mass="41137">MTVGIVEEKSITFQTDLRLESGRILGPITIAYETYGILNADRSNAIMVTHAWTGSAHLAGRYCESEQKPGWWNEIVGPGKLLDTNRYFVICSNVIGSCFGSTGPASINPKTGKKYALTFPVITVRDMVRAQALLIDHLGIERLHAVMGGSMGGMQALEWATQFPDRIASAVILATTPRPSAQAISLNAVARWAIFNDPTWKKGEYRKNPRDGLALARGIGHITFLSDESMTAKFGRRFSAKDGQFDFFGQFEVERYLNYNGYNFVDRFDTNAFLYLAKALDLYDVAWGYESLEEAFAQVKAPMQFFAFSSDWLYPPPQTEEMVRMLKKLGKPVEYHLINSAYGHDAFLLEHETFTPMVRDFLKKAGA</sequence>
<keyword id="KW-0012">Acyltransferase</keyword>
<keyword id="KW-0028">Amino-acid biosynthesis</keyword>
<keyword id="KW-0963">Cytoplasm</keyword>
<keyword id="KW-0486">Methionine biosynthesis</keyword>
<keyword id="KW-1185">Reference proteome</keyword>
<keyword id="KW-0808">Transferase</keyword>
<feature type="chain" id="PRO_1000132720" description="Homoserine O-acetyltransferase">
    <location>
        <begin position="1"/>
        <end position="367"/>
    </location>
</feature>
<feature type="domain" description="AB hydrolase-1" evidence="1">
    <location>
        <begin position="44"/>
        <end position="350"/>
    </location>
</feature>
<feature type="active site" description="Nucleophile" evidence="1">
    <location>
        <position position="150"/>
    </location>
</feature>
<feature type="active site" evidence="1">
    <location>
        <position position="311"/>
    </location>
</feature>
<feature type="active site" evidence="1">
    <location>
        <position position="344"/>
    </location>
</feature>
<feature type="binding site" evidence="1">
    <location>
        <position position="217"/>
    </location>
    <ligand>
        <name>substrate</name>
    </ligand>
</feature>
<feature type="binding site" evidence="1">
    <location>
        <position position="345"/>
    </location>
    <ligand>
        <name>substrate</name>
    </ligand>
</feature>
<reference key="1">
    <citation type="submission" date="2009-01" db="EMBL/GenBank/DDBJ databases">
        <title>Complete sequence of Geobacter sp. FRC-32.</title>
        <authorList>
            <consortium name="US DOE Joint Genome Institute"/>
            <person name="Lucas S."/>
            <person name="Copeland A."/>
            <person name="Lapidus A."/>
            <person name="Glavina del Rio T."/>
            <person name="Dalin E."/>
            <person name="Tice H."/>
            <person name="Bruce D."/>
            <person name="Goodwin L."/>
            <person name="Pitluck S."/>
            <person name="Saunders E."/>
            <person name="Brettin T."/>
            <person name="Detter J.C."/>
            <person name="Han C."/>
            <person name="Larimer F."/>
            <person name="Land M."/>
            <person name="Hauser L."/>
            <person name="Kyrpides N."/>
            <person name="Ovchinnikova G."/>
            <person name="Kostka J."/>
            <person name="Richardson P."/>
        </authorList>
    </citation>
    <scope>NUCLEOTIDE SEQUENCE [LARGE SCALE GENOMIC DNA]</scope>
    <source>
        <strain>DSM 22248 / JCM 15807 / FRC-32</strain>
    </source>
</reference>
<accession>B9M4M5</accession>
<dbReference type="EC" id="2.3.1.31" evidence="1"/>
<dbReference type="EMBL" id="CP001390">
    <property type="protein sequence ID" value="ACM19751.1"/>
    <property type="molecule type" value="Genomic_DNA"/>
</dbReference>
<dbReference type="RefSeq" id="WP_012646480.1">
    <property type="nucleotide sequence ID" value="NC_011979.1"/>
</dbReference>
<dbReference type="SMR" id="B9M4M5"/>
<dbReference type="STRING" id="316067.Geob_1391"/>
<dbReference type="ESTHER" id="geosf-metx">
    <property type="family name" value="Homoserine_transacetylase"/>
</dbReference>
<dbReference type="KEGG" id="geo:Geob_1391"/>
<dbReference type="eggNOG" id="COG2021">
    <property type="taxonomic scope" value="Bacteria"/>
</dbReference>
<dbReference type="HOGENOM" id="CLU_028760_1_2_7"/>
<dbReference type="OrthoDB" id="9800754at2"/>
<dbReference type="UniPathway" id="UPA00051">
    <property type="reaction ID" value="UER00074"/>
</dbReference>
<dbReference type="Proteomes" id="UP000007721">
    <property type="component" value="Chromosome"/>
</dbReference>
<dbReference type="GO" id="GO:0005737">
    <property type="term" value="C:cytoplasm"/>
    <property type="evidence" value="ECO:0007669"/>
    <property type="project" value="UniProtKB-SubCell"/>
</dbReference>
<dbReference type="GO" id="GO:0004414">
    <property type="term" value="F:homoserine O-acetyltransferase activity"/>
    <property type="evidence" value="ECO:0007669"/>
    <property type="project" value="UniProtKB-UniRule"/>
</dbReference>
<dbReference type="GO" id="GO:0009092">
    <property type="term" value="P:homoserine metabolic process"/>
    <property type="evidence" value="ECO:0007669"/>
    <property type="project" value="TreeGrafter"/>
</dbReference>
<dbReference type="GO" id="GO:0009086">
    <property type="term" value="P:methionine biosynthetic process"/>
    <property type="evidence" value="ECO:0007669"/>
    <property type="project" value="UniProtKB-UniRule"/>
</dbReference>
<dbReference type="FunFam" id="1.10.1740.110:FF:000001">
    <property type="entry name" value="Homoserine O-acetyltransferase"/>
    <property type="match status" value="1"/>
</dbReference>
<dbReference type="Gene3D" id="1.10.1740.110">
    <property type="match status" value="1"/>
</dbReference>
<dbReference type="Gene3D" id="3.40.50.1820">
    <property type="entry name" value="alpha/beta hydrolase"/>
    <property type="match status" value="1"/>
</dbReference>
<dbReference type="HAMAP" id="MF_00296">
    <property type="entry name" value="MetX_acyltransf"/>
    <property type="match status" value="1"/>
</dbReference>
<dbReference type="InterPro" id="IPR000073">
    <property type="entry name" value="AB_hydrolase_1"/>
</dbReference>
<dbReference type="InterPro" id="IPR029058">
    <property type="entry name" value="AB_hydrolase_fold"/>
</dbReference>
<dbReference type="InterPro" id="IPR008220">
    <property type="entry name" value="HAT_MetX-like"/>
</dbReference>
<dbReference type="NCBIfam" id="TIGR01392">
    <property type="entry name" value="homoserO_Ac_trn"/>
    <property type="match status" value="1"/>
</dbReference>
<dbReference type="NCBIfam" id="NF001209">
    <property type="entry name" value="PRK00175.1"/>
    <property type="match status" value="1"/>
</dbReference>
<dbReference type="PANTHER" id="PTHR32268">
    <property type="entry name" value="HOMOSERINE O-ACETYLTRANSFERASE"/>
    <property type="match status" value="1"/>
</dbReference>
<dbReference type="PANTHER" id="PTHR32268:SF11">
    <property type="entry name" value="HOMOSERINE O-ACETYLTRANSFERASE"/>
    <property type="match status" value="1"/>
</dbReference>
<dbReference type="Pfam" id="PF00561">
    <property type="entry name" value="Abhydrolase_1"/>
    <property type="match status" value="1"/>
</dbReference>
<dbReference type="PIRSF" id="PIRSF000443">
    <property type="entry name" value="Homoser_Ac_trans"/>
    <property type="match status" value="1"/>
</dbReference>
<dbReference type="SUPFAM" id="SSF53474">
    <property type="entry name" value="alpha/beta-Hydrolases"/>
    <property type="match status" value="1"/>
</dbReference>
<gene>
    <name evidence="1" type="primary">metXA</name>
    <name type="ordered locus">Geob_1391</name>
</gene>
<protein>
    <recommendedName>
        <fullName evidence="1">Homoserine O-acetyltransferase</fullName>
        <shortName evidence="1">HAT</shortName>
        <ecNumber evidence="1">2.3.1.31</ecNumber>
    </recommendedName>
    <alternativeName>
        <fullName evidence="1">Homoserine transacetylase</fullName>
        <shortName evidence="1">HTA</shortName>
    </alternativeName>
</protein>
<organism>
    <name type="scientific">Geotalea daltonii (strain DSM 22248 / JCM 15807 / FRC-32)</name>
    <name type="common">Geobacter daltonii</name>
    <dbReference type="NCBI Taxonomy" id="316067"/>
    <lineage>
        <taxon>Bacteria</taxon>
        <taxon>Pseudomonadati</taxon>
        <taxon>Thermodesulfobacteriota</taxon>
        <taxon>Desulfuromonadia</taxon>
        <taxon>Geobacterales</taxon>
        <taxon>Geobacteraceae</taxon>
        <taxon>Geotalea</taxon>
    </lineage>
</organism>
<evidence type="ECO:0000255" key="1">
    <source>
        <dbReference type="HAMAP-Rule" id="MF_00296"/>
    </source>
</evidence>